<feature type="chain" id="PRO_0000451535" description="Polyprenyl transferase dpmaC">
    <location>
        <begin position="1"/>
        <end position="295"/>
    </location>
</feature>
<feature type="transmembrane region" description="Helical" evidence="2">
    <location>
        <begin position="39"/>
        <end position="59"/>
    </location>
</feature>
<feature type="transmembrane region" description="Helical" evidence="2">
    <location>
        <begin position="84"/>
        <end position="104"/>
    </location>
</feature>
<feature type="transmembrane region" description="Helical" evidence="2">
    <location>
        <begin position="109"/>
        <end position="124"/>
    </location>
</feature>
<feature type="transmembrane region" description="Helical" evidence="2">
    <location>
        <begin position="131"/>
        <end position="151"/>
    </location>
</feature>
<feature type="transmembrane region" description="Helical" evidence="2">
    <location>
        <begin position="168"/>
        <end position="188"/>
    </location>
</feature>
<feature type="transmembrane region" description="Helical" evidence="2">
    <location>
        <begin position="213"/>
        <end position="233"/>
    </location>
</feature>
<feature type="transmembrane region" description="Helical" evidence="2">
    <location>
        <begin position="237"/>
        <end position="257"/>
    </location>
</feature>
<feature type="transmembrane region" description="Helical" evidence="2">
    <location>
        <begin position="271"/>
        <end position="291"/>
    </location>
</feature>
<gene>
    <name evidence="4" type="primary">dpasC</name>
</gene>
<proteinExistence type="evidence at protein level"/>
<name>DPMAC_METAN</name>
<dbReference type="EC" id="2.5.1.-" evidence="6"/>
<dbReference type="EMBL" id="JNNZ01000128">
    <property type="status" value="NOT_ANNOTATED_CDS"/>
    <property type="molecule type" value="Genomic_DNA"/>
</dbReference>
<dbReference type="SMR" id="P9WEX8"/>
<dbReference type="VEuPathDB" id="FungiDB:MAN_09810"/>
<dbReference type="UniPathway" id="UPA00213"/>
<dbReference type="GO" id="GO:0005886">
    <property type="term" value="C:plasma membrane"/>
    <property type="evidence" value="ECO:0007669"/>
    <property type="project" value="TreeGrafter"/>
</dbReference>
<dbReference type="GO" id="GO:0016765">
    <property type="term" value="F:transferase activity, transferring alkyl or aryl (other than methyl) groups"/>
    <property type="evidence" value="ECO:0007669"/>
    <property type="project" value="InterPro"/>
</dbReference>
<dbReference type="GO" id="GO:0016114">
    <property type="term" value="P:terpenoid biosynthetic process"/>
    <property type="evidence" value="ECO:0007669"/>
    <property type="project" value="UniProtKB-UniPathway"/>
</dbReference>
<dbReference type="CDD" id="cd13959">
    <property type="entry name" value="PT_UbiA_COQ2"/>
    <property type="match status" value="1"/>
</dbReference>
<dbReference type="FunFam" id="1.10.357.140:FF:000008">
    <property type="entry name" value="4-hydroxybenzoate octaprenyltransferase"/>
    <property type="match status" value="1"/>
</dbReference>
<dbReference type="FunFam" id="1.20.120.1780:FF:000001">
    <property type="entry name" value="4-hydroxybenzoate octaprenyltransferase"/>
    <property type="match status" value="1"/>
</dbReference>
<dbReference type="Gene3D" id="1.10.357.140">
    <property type="entry name" value="UbiA prenyltransferase"/>
    <property type="match status" value="1"/>
</dbReference>
<dbReference type="Gene3D" id="1.20.120.1780">
    <property type="entry name" value="UbiA prenyltransferase"/>
    <property type="match status" value="1"/>
</dbReference>
<dbReference type="InterPro" id="IPR039653">
    <property type="entry name" value="Prenyltransferase"/>
</dbReference>
<dbReference type="InterPro" id="IPR000537">
    <property type="entry name" value="UbiA_prenyltransferase"/>
</dbReference>
<dbReference type="InterPro" id="IPR030470">
    <property type="entry name" value="UbiA_prenylTrfase_CS"/>
</dbReference>
<dbReference type="InterPro" id="IPR044878">
    <property type="entry name" value="UbiA_sf"/>
</dbReference>
<dbReference type="PANTHER" id="PTHR11048:SF28">
    <property type="entry name" value="4-HYDROXYBENZOATE POLYPRENYLTRANSFERASE, MITOCHONDRIAL"/>
    <property type="match status" value="1"/>
</dbReference>
<dbReference type="PANTHER" id="PTHR11048">
    <property type="entry name" value="PRENYLTRANSFERASES"/>
    <property type="match status" value="1"/>
</dbReference>
<dbReference type="Pfam" id="PF01040">
    <property type="entry name" value="UbiA"/>
    <property type="match status" value="1"/>
</dbReference>
<dbReference type="PROSITE" id="PS00943">
    <property type="entry name" value="UBIA"/>
    <property type="match status" value="1"/>
</dbReference>
<accession>P9WEX8</accession>
<sequence length="295" mass="32948">MPTRANKVETAWSALLAGASETRQEHLAPSPLFILRQTLFCVLAAYLFCGAGMVWNDWIDRDIDANVARTKNRPLASGKVTTAQAFVWMALQVIASCAVLHVMLDGKDVHVIPVMIASMLYPFLKRPTAKKLHIYPQYMLAFTIAWPAIPGRAAICGRDESFGETVRYCLPLCTVVFFWTIYLNTAYSYQDVVDDRKLNVNSFYNIAGRHTHLVLVALVCPILACLPLYLTQFQSTWLWVTWMGVWTAAFAVQLALFDAKQPASGGSLHKSNFVLGIWTIVVCSVELLLKARVSI</sequence>
<keyword id="KW-0472">Membrane</keyword>
<keyword id="KW-0808">Transferase</keyword>
<keyword id="KW-0812">Transmembrane</keyword>
<keyword id="KW-1133">Transmembrane helix</keyword>
<organism>
    <name type="scientific">Metarhizium anisopliae</name>
    <name type="common">Entomophthora anisopliae</name>
    <dbReference type="NCBI Taxonomy" id="5530"/>
    <lineage>
        <taxon>Eukaryota</taxon>
        <taxon>Fungi</taxon>
        <taxon>Dikarya</taxon>
        <taxon>Ascomycota</taxon>
        <taxon>Pezizomycotina</taxon>
        <taxon>Sordariomycetes</taxon>
        <taxon>Hypocreomycetidae</taxon>
        <taxon>Hypocreales</taxon>
        <taxon>Clavicipitaceae</taxon>
        <taxon>Metarhizium</taxon>
    </lineage>
</organism>
<evidence type="ECO:0000250" key="1">
    <source>
        <dbReference type="UniProtKB" id="P32378"/>
    </source>
</evidence>
<evidence type="ECO:0000255" key="2"/>
<evidence type="ECO:0000269" key="3">
    <source>
    </source>
</evidence>
<evidence type="ECO:0000303" key="4">
    <source>
    </source>
</evidence>
<evidence type="ECO:0000305" key="5"/>
<evidence type="ECO:0000305" key="6">
    <source>
    </source>
</evidence>
<protein>
    <recommendedName>
        <fullName evidence="4">Polyprenyl transferase dpmaC</fullName>
        <ecNumber evidence="6">2.5.1.-</ecNumber>
    </recommendedName>
    <alternativeName>
        <fullName evidence="4">Diterpenoid pyrone biosynthesis cluster protein C</fullName>
    </alternativeName>
</protein>
<reference key="1">
    <citation type="journal article" date="2014" name="BMC Genomics">
        <title>Comparative genome analysis of entomopathogenic fungi reveals a complex set of secreted proteins.</title>
        <authorList>
            <person name="Staats C.C."/>
            <person name="Junges A."/>
            <person name="Guedes R.L."/>
            <person name="Thompson C.E."/>
            <person name="de Morais G.L."/>
            <person name="Boldo J.T."/>
            <person name="de Almeida L.G."/>
            <person name="Andreis F.C."/>
            <person name="Gerber A.L."/>
            <person name="Sbaraini N."/>
            <person name="da Paixao R.L."/>
            <person name="Broetto L."/>
            <person name="Landell M."/>
            <person name="Santi L."/>
            <person name="Beys-da-Silva W.O."/>
            <person name="Silveira C.P."/>
            <person name="Serrano T.R."/>
            <person name="de Oliveira E.S."/>
            <person name="Kmetzsch L."/>
            <person name="Vainstein M.H."/>
            <person name="de Vasconcelos A.T."/>
            <person name="Schrank A."/>
        </authorList>
    </citation>
    <scope>NUCLEOTIDE SEQUENCE [LARGE SCALE GENOMIC DNA]</scope>
</reference>
<reference key="2">
    <citation type="journal article" date="2020" name="Nat. Commun.">
        <title>Synthetic biology based construction of biological activity-related library of fungal decalin-containing diterpenoid pyrones.</title>
        <authorList>
            <person name="Tsukada K."/>
            <person name="Shinki S."/>
            <person name="Kaneko A."/>
            <person name="Murakami K."/>
            <person name="Irie K."/>
            <person name="Murai M."/>
            <person name="Miyoshi H."/>
            <person name="Dan S."/>
            <person name="Kawaji K."/>
            <person name="Hayashi H."/>
            <person name="Kodama E.N."/>
            <person name="Hori A."/>
            <person name="Salim E."/>
            <person name="Kuraishi T."/>
            <person name="Hirata N."/>
            <person name="Kanda Y."/>
            <person name="Asai T."/>
        </authorList>
    </citation>
    <scope>FUNCTION</scope>
    <scope>PATHWAY</scope>
    <scope>BIOTECHNOLOGY</scope>
</reference>
<comment type="function">
    <text evidence="3 6">Polyprenyl transferase; part of the gene cluster that mediates the biosynthesis of the diterpenoid pyrones subglutinols A and B (PubMed:32286350). The first step of the pathway is the synthesis of the alpha-pyrone moiety by the polyketide synthase dpmaA via condensation of one acetyl-CoA starter unit with 3 malonyl-CoA units and 2 methylations (Probable). The alpha-pyrone is then combined with geranylgeranyl pyrophosphate (GGPP) formed by the GGPP synthase dpmaD through the action of the prenyltransferase dpmaC to yield a linear alpha-pyrone diterpenoid (Probable). Subsequent steps in the diterpenoid pyrone biosynthetic pathway involve the decalin core formation, which is initiated by the epoxidation of the C10-C11 olefin by the FAD-dependent oxidoreductase dpmaE, and is followed by a cyclization cascade catalyzed by the terpene cyclase dpmaB (Probable). The dehydrogenase dpmaF is then involved in tetrahydrofuran (THF) ring formation at the C5 unit to complete the formation of subglutinols A and B (PubMed:32286350).</text>
</comment>
<comment type="cofactor">
    <cofactor evidence="1">
        <name>Mg(2+)</name>
        <dbReference type="ChEBI" id="CHEBI:18420"/>
    </cofactor>
</comment>
<comment type="pathway">
    <text evidence="3">Secondary metabolite biosynthesis; terpenoid biosynthesis.</text>
</comment>
<comment type="subcellular location">
    <subcellularLocation>
        <location evidence="2">Membrane</location>
        <topology evidence="2">Multi-pass membrane protein</topology>
    </subcellularLocation>
</comment>
<comment type="biotechnology">
    <text evidence="3">Diterpenoid pyrones display various biological activities and subglutinol A shows insecticidal and anti-HIV activities.</text>
</comment>
<comment type="similarity">
    <text evidence="5">Belongs to the UbiA prenyltransferase family.</text>
</comment>